<organism>
    <name type="scientific">Mycosarcoma maydis</name>
    <name type="common">Corn smut fungus</name>
    <name type="synonym">Ustilago maydis</name>
    <dbReference type="NCBI Taxonomy" id="5270"/>
    <lineage>
        <taxon>Eukaryota</taxon>
        <taxon>Fungi</taxon>
        <taxon>Dikarya</taxon>
        <taxon>Basidiomycota</taxon>
        <taxon>Ustilaginomycotina</taxon>
        <taxon>Ustilaginomycetes</taxon>
        <taxon>Ustilaginales</taxon>
        <taxon>Ustilaginaceae</taxon>
        <taxon>Mycosarcoma</taxon>
    </lineage>
</organism>
<protein>
    <recommendedName>
        <fullName evidence="1">Elongation factor G, mitochondrial</fullName>
        <shortName evidence="1">EF-Gmt</shortName>
    </recommendedName>
    <alternativeName>
        <fullName evidence="1">Elongation factor G 1, mitochondrial</fullName>
        <shortName evidence="1">mEF-G 1</shortName>
    </alternativeName>
    <alternativeName>
        <fullName evidence="1">Elongation factor G1</fullName>
    </alternativeName>
</protein>
<proteinExistence type="inferred from homology"/>
<accession>Q4P257</accession>
<accession>A0A0D1DNT3</accession>
<gene>
    <name evidence="1" type="primary">MEF1</name>
    <name type="ORF">UMAG_05806</name>
</gene>
<comment type="function">
    <text evidence="1">Mitochondrial GTPase that catalyzes the GTP-dependent ribosomal translocation step during translation elongation. During this step, the ribosome changes from the pre-translocational (PRE) to the post-translocational (POST) state as the newly formed A-site-bound peptidyl-tRNA and P-site-bound deacylated tRNA move to the P and E sites, respectively. Catalyzes the coordinated movement of the two tRNA molecules, the mRNA and conformational changes in the ribosome.</text>
</comment>
<comment type="pathway">
    <text evidence="1">Protein biosynthesis; polypeptide chain elongation.</text>
</comment>
<comment type="subcellular location">
    <subcellularLocation>
        <location evidence="1">Mitochondrion</location>
    </subcellularLocation>
</comment>
<comment type="similarity">
    <text evidence="3">Belongs to the TRAFAC class translation factor GTPase superfamily. Classic translation factor GTPase family. EF-G/EF-2 subfamily.</text>
</comment>
<reference key="1">
    <citation type="journal article" date="2006" name="Nature">
        <title>Insights from the genome of the biotrophic fungal plant pathogen Ustilago maydis.</title>
        <authorList>
            <person name="Kaemper J."/>
            <person name="Kahmann R."/>
            <person name="Boelker M."/>
            <person name="Ma L.-J."/>
            <person name="Brefort T."/>
            <person name="Saville B.J."/>
            <person name="Banuett F."/>
            <person name="Kronstad J.W."/>
            <person name="Gold S.E."/>
            <person name="Mueller O."/>
            <person name="Perlin M.H."/>
            <person name="Woesten H.A.B."/>
            <person name="de Vries R."/>
            <person name="Ruiz-Herrera J."/>
            <person name="Reynaga-Pena C.G."/>
            <person name="Snetselaar K."/>
            <person name="McCann M."/>
            <person name="Perez-Martin J."/>
            <person name="Feldbruegge M."/>
            <person name="Basse C.W."/>
            <person name="Steinberg G."/>
            <person name="Ibeas J.I."/>
            <person name="Holloman W."/>
            <person name="Guzman P."/>
            <person name="Farman M.L."/>
            <person name="Stajich J.E."/>
            <person name="Sentandreu R."/>
            <person name="Gonzalez-Prieto J.M."/>
            <person name="Kennell J.C."/>
            <person name="Molina L."/>
            <person name="Schirawski J."/>
            <person name="Mendoza-Mendoza A."/>
            <person name="Greilinger D."/>
            <person name="Muench K."/>
            <person name="Roessel N."/>
            <person name="Scherer M."/>
            <person name="Vranes M."/>
            <person name="Ladendorf O."/>
            <person name="Vincon V."/>
            <person name="Fuchs U."/>
            <person name="Sandrock B."/>
            <person name="Meng S."/>
            <person name="Ho E.C.H."/>
            <person name="Cahill M.J."/>
            <person name="Boyce K.J."/>
            <person name="Klose J."/>
            <person name="Klosterman S.J."/>
            <person name="Deelstra H.J."/>
            <person name="Ortiz-Castellanos L."/>
            <person name="Li W."/>
            <person name="Sanchez-Alonso P."/>
            <person name="Schreier P.H."/>
            <person name="Haeuser-Hahn I."/>
            <person name="Vaupel M."/>
            <person name="Koopmann E."/>
            <person name="Friedrich G."/>
            <person name="Voss H."/>
            <person name="Schlueter T."/>
            <person name="Margolis J."/>
            <person name="Platt D."/>
            <person name="Swimmer C."/>
            <person name="Gnirke A."/>
            <person name="Chen F."/>
            <person name="Vysotskaia V."/>
            <person name="Mannhaupt G."/>
            <person name="Gueldener U."/>
            <person name="Muensterkoetter M."/>
            <person name="Haase D."/>
            <person name="Oesterheld M."/>
            <person name="Mewes H.-W."/>
            <person name="Mauceli E.W."/>
            <person name="DeCaprio D."/>
            <person name="Wade C.M."/>
            <person name="Butler J."/>
            <person name="Young S.K."/>
            <person name="Jaffe D.B."/>
            <person name="Calvo S.E."/>
            <person name="Nusbaum C."/>
            <person name="Galagan J.E."/>
            <person name="Birren B.W."/>
        </authorList>
    </citation>
    <scope>NUCLEOTIDE SEQUENCE [LARGE SCALE GENOMIC DNA]</scope>
    <source>
        <strain>DSM 14603 / FGSC 9021 / UM521</strain>
    </source>
</reference>
<reference key="2">
    <citation type="submission" date="2014-09" db="EMBL/GenBank/DDBJ databases">
        <authorList>
            <person name="Gueldener U."/>
            <person name="Muensterkoetter M."/>
            <person name="Walter M.C."/>
            <person name="Mannhaupt G."/>
            <person name="Kahmann R."/>
        </authorList>
    </citation>
    <scope>GENOME REANNOTATION</scope>
    <source>
        <strain>DSM 14603 / FGSC 9021 / UM521</strain>
    </source>
</reference>
<feature type="transit peptide" description="Mitochondrion" evidence="1">
    <location>
        <begin position="1"/>
        <end position="58"/>
    </location>
</feature>
<feature type="chain" id="PRO_0000385586" description="Elongation factor G, mitochondrial">
    <location>
        <begin position="59"/>
        <end position="842"/>
    </location>
</feature>
<feature type="domain" description="tr-type G">
    <location>
        <begin position="93"/>
        <end position="398"/>
    </location>
</feature>
<feature type="region of interest" description="Disordered" evidence="2">
    <location>
        <begin position="423"/>
        <end position="442"/>
    </location>
</feature>
<feature type="binding site" evidence="1">
    <location>
        <begin position="102"/>
        <end position="109"/>
    </location>
    <ligand>
        <name>GTP</name>
        <dbReference type="ChEBI" id="CHEBI:37565"/>
    </ligand>
</feature>
<feature type="binding site" evidence="1">
    <location>
        <begin position="196"/>
        <end position="200"/>
    </location>
    <ligand>
        <name>GTP</name>
        <dbReference type="ChEBI" id="CHEBI:37565"/>
    </ligand>
</feature>
<feature type="binding site" evidence="1">
    <location>
        <begin position="250"/>
        <end position="253"/>
    </location>
    <ligand>
        <name>GTP</name>
        <dbReference type="ChEBI" id="CHEBI:37565"/>
    </ligand>
</feature>
<dbReference type="EMBL" id="CM003159">
    <property type="protein sequence ID" value="KIS66064.1"/>
    <property type="molecule type" value="Genomic_DNA"/>
</dbReference>
<dbReference type="RefSeq" id="XP_011392180.1">
    <property type="nucleotide sequence ID" value="XM_011393878.1"/>
</dbReference>
<dbReference type="SMR" id="Q4P257"/>
<dbReference type="FunCoup" id="Q4P257">
    <property type="interactions" value="315"/>
</dbReference>
<dbReference type="STRING" id="237631.Q4P257"/>
<dbReference type="EnsemblFungi" id="KIS66064">
    <property type="protein sequence ID" value="KIS66064"/>
    <property type="gene ID" value="UMAG_05806"/>
</dbReference>
<dbReference type="GeneID" id="23565594"/>
<dbReference type="KEGG" id="uma:UMAG_05806"/>
<dbReference type="VEuPathDB" id="FungiDB:UMAG_05806"/>
<dbReference type="eggNOG" id="KOG0465">
    <property type="taxonomic scope" value="Eukaryota"/>
</dbReference>
<dbReference type="HOGENOM" id="CLU_002794_4_0_1"/>
<dbReference type="InParanoid" id="Q4P257"/>
<dbReference type="OMA" id="GQFAKVQ"/>
<dbReference type="OrthoDB" id="198619at2759"/>
<dbReference type="UniPathway" id="UPA00345"/>
<dbReference type="Proteomes" id="UP000000561">
    <property type="component" value="Chromosome 20"/>
</dbReference>
<dbReference type="GO" id="GO:0005739">
    <property type="term" value="C:mitochondrion"/>
    <property type="evidence" value="ECO:0000318"/>
    <property type="project" value="GO_Central"/>
</dbReference>
<dbReference type="GO" id="GO:0005525">
    <property type="term" value="F:GTP binding"/>
    <property type="evidence" value="ECO:0007669"/>
    <property type="project" value="UniProtKB-UniRule"/>
</dbReference>
<dbReference type="GO" id="GO:0003924">
    <property type="term" value="F:GTPase activity"/>
    <property type="evidence" value="ECO:0000318"/>
    <property type="project" value="GO_Central"/>
</dbReference>
<dbReference type="GO" id="GO:0003746">
    <property type="term" value="F:translation elongation factor activity"/>
    <property type="evidence" value="ECO:0000318"/>
    <property type="project" value="GO_Central"/>
</dbReference>
<dbReference type="GO" id="GO:0070125">
    <property type="term" value="P:mitochondrial translational elongation"/>
    <property type="evidence" value="ECO:0000318"/>
    <property type="project" value="GO_Central"/>
</dbReference>
<dbReference type="CDD" id="cd01886">
    <property type="entry name" value="EF-G"/>
    <property type="match status" value="1"/>
</dbReference>
<dbReference type="CDD" id="cd16262">
    <property type="entry name" value="EFG_III"/>
    <property type="match status" value="1"/>
</dbReference>
<dbReference type="CDD" id="cd01434">
    <property type="entry name" value="EFG_mtEFG1_IV"/>
    <property type="match status" value="1"/>
</dbReference>
<dbReference type="CDD" id="cd04097">
    <property type="entry name" value="mtEFG1_C"/>
    <property type="match status" value="1"/>
</dbReference>
<dbReference type="CDD" id="cd04091">
    <property type="entry name" value="mtEFG1_II_like"/>
    <property type="match status" value="1"/>
</dbReference>
<dbReference type="FunFam" id="3.30.230.10:FF:000003">
    <property type="entry name" value="Elongation factor G"/>
    <property type="match status" value="1"/>
</dbReference>
<dbReference type="FunFam" id="3.30.70.240:FF:000001">
    <property type="entry name" value="Elongation factor G"/>
    <property type="match status" value="1"/>
</dbReference>
<dbReference type="FunFam" id="3.30.70.870:FF:000001">
    <property type="entry name" value="Elongation factor G"/>
    <property type="match status" value="1"/>
</dbReference>
<dbReference type="FunFam" id="2.40.30.10:FF:000022">
    <property type="entry name" value="Elongation factor G, mitochondrial"/>
    <property type="match status" value="1"/>
</dbReference>
<dbReference type="FunFam" id="3.40.50.300:FF:000558">
    <property type="entry name" value="Elongation factor G, mitochondrial"/>
    <property type="match status" value="1"/>
</dbReference>
<dbReference type="Gene3D" id="3.30.230.10">
    <property type="match status" value="1"/>
</dbReference>
<dbReference type="Gene3D" id="3.30.70.240">
    <property type="match status" value="1"/>
</dbReference>
<dbReference type="Gene3D" id="3.30.70.870">
    <property type="entry name" value="Elongation Factor G (Translational Gtpase), domain 3"/>
    <property type="match status" value="1"/>
</dbReference>
<dbReference type="Gene3D" id="3.40.50.300">
    <property type="entry name" value="P-loop containing nucleotide triphosphate hydrolases"/>
    <property type="match status" value="1"/>
</dbReference>
<dbReference type="Gene3D" id="2.40.30.10">
    <property type="entry name" value="Translation factors"/>
    <property type="match status" value="1"/>
</dbReference>
<dbReference type="HAMAP" id="MF_00054_B">
    <property type="entry name" value="EF_G_EF_2_B"/>
    <property type="match status" value="1"/>
</dbReference>
<dbReference type="InterPro" id="IPR041095">
    <property type="entry name" value="EFG_II"/>
</dbReference>
<dbReference type="InterPro" id="IPR009022">
    <property type="entry name" value="EFG_III"/>
</dbReference>
<dbReference type="InterPro" id="IPR035647">
    <property type="entry name" value="EFG_III/V"/>
</dbReference>
<dbReference type="InterPro" id="IPR047872">
    <property type="entry name" value="EFG_IV"/>
</dbReference>
<dbReference type="InterPro" id="IPR035649">
    <property type="entry name" value="EFG_V"/>
</dbReference>
<dbReference type="InterPro" id="IPR000640">
    <property type="entry name" value="EFG_V-like"/>
</dbReference>
<dbReference type="InterPro" id="IPR004161">
    <property type="entry name" value="EFTu-like_2"/>
</dbReference>
<dbReference type="InterPro" id="IPR027417">
    <property type="entry name" value="P-loop_NTPase"/>
</dbReference>
<dbReference type="InterPro" id="IPR020568">
    <property type="entry name" value="Ribosomal_Su5_D2-typ_SF"/>
</dbReference>
<dbReference type="InterPro" id="IPR014721">
    <property type="entry name" value="Ribsml_uS5_D2-typ_fold_subgr"/>
</dbReference>
<dbReference type="InterPro" id="IPR005225">
    <property type="entry name" value="Small_GTP-bd"/>
</dbReference>
<dbReference type="InterPro" id="IPR000795">
    <property type="entry name" value="T_Tr_GTP-bd_dom"/>
</dbReference>
<dbReference type="InterPro" id="IPR009000">
    <property type="entry name" value="Transl_B-barrel_sf"/>
</dbReference>
<dbReference type="InterPro" id="IPR004540">
    <property type="entry name" value="Transl_elong_EFG/EF2"/>
</dbReference>
<dbReference type="InterPro" id="IPR005517">
    <property type="entry name" value="Transl_elong_EFG/EF2_IV"/>
</dbReference>
<dbReference type="NCBIfam" id="TIGR00231">
    <property type="entry name" value="small_GTP"/>
    <property type="match status" value="1"/>
</dbReference>
<dbReference type="PANTHER" id="PTHR43636">
    <property type="entry name" value="ELONGATION FACTOR G, MITOCHONDRIAL"/>
    <property type="match status" value="1"/>
</dbReference>
<dbReference type="PANTHER" id="PTHR43636:SF2">
    <property type="entry name" value="ELONGATION FACTOR G, MITOCHONDRIAL"/>
    <property type="match status" value="1"/>
</dbReference>
<dbReference type="Pfam" id="PF00679">
    <property type="entry name" value="EFG_C"/>
    <property type="match status" value="1"/>
</dbReference>
<dbReference type="Pfam" id="PF14492">
    <property type="entry name" value="EFG_III"/>
    <property type="match status" value="1"/>
</dbReference>
<dbReference type="Pfam" id="PF03764">
    <property type="entry name" value="EFG_IV"/>
    <property type="match status" value="1"/>
</dbReference>
<dbReference type="Pfam" id="PF00009">
    <property type="entry name" value="GTP_EFTU"/>
    <property type="match status" value="1"/>
</dbReference>
<dbReference type="Pfam" id="PF03144">
    <property type="entry name" value="GTP_EFTU_D2"/>
    <property type="match status" value="1"/>
</dbReference>
<dbReference type="PRINTS" id="PR00315">
    <property type="entry name" value="ELONGATNFCT"/>
</dbReference>
<dbReference type="SMART" id="SM00838">
    <property type="entry name" value="EFG_C"/>
    <property type="match status" value="1"/>
</dbReference>
<dbReference type="SMART" id="SM00889">
    <property type="entry name" value="EFG_IV"/>
    <property type="match status" value="1"/>
</dbReference>
<dbReference type="SUPFAM" id="SSF54980">
    <property type="entry name" value="EF-G C-terminal domain-like"/>
    <property type="match status" value="2"/>
</dbReference>
<dbReference type="SUPFAM" id="SSF52540">
    <property type="entry name" value="P-loop containing nucleoside triphosphate hydrolases"/>
    <property type="match status" value="1"/>
</dbReference>
<dbReference type="SUPFAM" id="SSF54211">
    <property type="entry name" value="Ribosomal protein S5 domain 2-like"/>
    <property type="match status" value="1"/>
</dbReference>
<dbReference type="SUPFAM" id="SSF50447">
    <property type="entry name" value="Translation proteins"/>
    <property type="match status" value="1"/>
</dbReference>
<dbReference type="PROSITE" id="PS51722">
    <property type="entry name" value="G_TR_2"/>
    <property type="match status" value="1"/>
</dbReference>
<sequence length="842" mass="92219">MVAIPRVAAARSLARQLARQSLRTTSFASAPVRIAIASTPLARSPSSFRSLSSSTRRSAAAAAAAAAAKATPAHDDSHTPMAVLTEADLGRLVRQRNVGISAHIDSGKTTLTERVLFYTGRIKDIHEVRGRDAVGAKMDHMELEREKGITIQSAATYCSWKATPPTEKASVSGDAANVESKELMEKKQDFHINIIDTPGHVDFTIEVERALRVLDGAVLVLCAVSGVQSQTITVDRQMRRYSVPRISFINKMDRAGANPWRVIGQIRNKLKMPAAAVQIPIGAEDDFNGVIDLIRWKAVYNEGHKGIDIRETDEIPAEYLELAKQKRAELIEQLAEVDDEMTEMFIEEREPTIEELAAAIRRTTIRCQFSPVFLGSAIKNKGVQAMLDGVCSYLPNPAEVPATAMDMSSAATKKAAEEAAQAAGEDQEAAAEARKNAAPPVLPLSPASEAPLVGLAFKLEEGKYGQLTYMRVYQGTLKRGNLIFNARTGKKVKVPRLVRMHSNDMEDVDEIGAGEICAMFGVECSSGDTFTDGTTQLSMTSMFVPEPVISLAITPEGKESQNFSRALNRFQKEDPTFRVHVDKESNETIISGMGELHLEIYVERMRREYNVPCTTGKPRVAFRETIEKKATFAYTHKKQTGGAGQFGRVMGYIEPMEVDPETGVDTAFDNRVVGGSIPNGYISACEKGFYDALEKGALSGHAVTGVRFVLEDGAAHSVDSSELAFRLATAGAFREAYQKANPVILEPKMTVEVVAPIEFQGAVIGALNQRKGTISDTEVREDEFTLTAEVSLNDMFGYSSQLRGLTQGKGEFSMEYKCHTPVMMNIQKEMHEAYRKKQTEKK</sequence>
<name>EFGM_MYCMD</name>
<evidence type="ECO:0000255" key="1">
    <source>
        <dbReference type="HAMAP-Rule" id="MF_03061"/>
    </source>
</evidence>
<evidence type="ECO:0000256" key="2">
    <source>
        <dbReference type="SAM" id="MobiDB-lite"/>
    </source>
</evidence>
<evidence type="ECO:0000305" key="3"/>
<keyword id="KW-0251">Elongation factor</keyword>
<keyword id="KW-0342">GTP-binding</keyword>
<keyword id="KW-0496">Mitochondrion</keyword>
<keyword id="KW-0547">Nucleotide-binding</keyword>
<keyword id="KW-0648">Protein biosynthesis</keyword>
<keyword id="KW-1185">Reference proteome</keyword>
<keyword id="KW-0809">Transit peptide</keyword>